<keyword id="KW-1003">Cell membrane</keyword>
<keyword id="KW-0472">Membrane</keyword>
<keyword id="KW-1185">Reference proteome</keyword>
<keyword id="KW-0812">Transmembrane</keyword>
<keyword id="KW-1133">Transmembrane helix</keyword>
<reference key="1">
    <citation type="journal article" date="2001" name="Nature">
        <title>The DNA sequence and comparative analysis of human chromosome 20.</title>
        <authorList>
            <person name="Deloukas P."/>
            <person name="Matthews L.H."/>
            <person name="Ashurst J.L."/>
            <person name="Burton J."/>
            <person name="Gilbert J.G.R."/>
            <person name="Jones M."/>
            <person name="Stavrides G."/>
            <person name="Almeida J.P."/>
            <person name="Babbage A.K."/>
            <person name="Bagguley C.L."/>
            <person name="Bailey J."/>
            <person name="Barlow K.F."/>
            <person name="Bates K.N."/>
            <person name="Beard L.M."/>
            <person name="Beare D.M."/>
            <person name="Beasley O.P."/>
            <person name="Bird C.P."/>
            <person name="Blakey S.E."/>
            <person name="Bridgeman A.M."/>
            <person name="Brown A.J."/>
            <person name="Buck D."/>
            <person name="Burrill W.D."/>
            <person name="Butler A.P."/>
            <person name="Carder C."/>
            <person name="Carter N.P."/>
            <person name="Chapman J.C."/>
            <person name="Clamp M."/>
            <person name="Clark G."/>
            <person name="Clark L.N."/>
            <person name="Clark S.Y."/>
            <person name="Clee C.M."/>
            <person name="Clegg S."/>
            <person name="Cobley V.E."/>
            <person name="Collier R.E."/>
            <person name="Connor R.E."/>
            <person name="Corby N.R."/>
            <person name="Coulson A."/>
            <person name="Coville G.J."/>
            <person name="Deadman R."/>
            <person name="Dhami P.D."/>
            <person name="Dunn M."/>
            <person name="Ellington A.G."/>
            <person name="Frankland J.A."/>
            <person name="Fraser A."/>
            <person name="French L."/>
            <person name="Garner P."/>
            <person name="Grafham D.V."/>
            <person name="Griffiths C."/>
            <person name="Griffiths M.N.D."/>
            <person name="Gwilliam R."/>
            <person name="Hall R.E."/>
            <person name="Hammond S."/>
            <person name="Harley J.L."/>
            <person name="Heath P.D."/>
            <person name="Ho S."/>
            <person name="Holden J.L."/>
            <person name="Howden P.J."/>
            <person name="Huckle E."/>
            <person name="Hunt A.R."/>
            <person name="Hunt S.E."/>
            <person name="Jekosch K."/>
            <person name="Johnson C.M."/>
            <person name="Johnson D."/>
            <person name="Kay M.P."/>
            <person name="Kimberley A.M."/>
            <person name="King A."/>
            <person name="Knights A."/>
            <person name="Laird G.K."/>
            <person name="Lawlor S."/>
            <person name="Lehvaeslaiho M.H."/>
            <person name="Leversha M.A."/>
            <person name="Lloyd C."/>
            <person name="Lloyd D.M."/>
            <person name="Lovell J.D."/>
            <person name="Marsh V.L."/>
            <person name="Martin S.L."/>
            <person name="McConnachie L.J."/>
            <person name="McLay K."/>
            <person name="McMurray A.A."/>
            <person name="Milne S.A."/>
            <person name="Mistry D."/>
            <person name="Moore M.J.F."/>
            <person name="Mullikin J.C."/>
            <person name="Nickerson T."/>
            <person name="Oliver K."/>
            <person name="Parker A."/>
            <person name="Patel R."/>
            <person name="Pearce T.A.V."/>
            <person name="Peck A.I."/>
            <person name="Phillimore B.J.C.T."/>
            <person name="Prathalingam S.R."/>
            <person name="Plumb R.W."/>
            <person name="Ramsay H."/>
            <person name="Rice C.M."/>
            <person name="Ross M.T."/>
            <person name="Scott C.E."/>
            <person name="Sehra H.K."/>
            <person name="Shownkeen R."/>
            <person name="Sims S."/>
            <person name="Skuce C.D."/>
            <person name="Smith M.L."/>
            <person name="Soderlund C."/>
            <person name="Steward C.A."/>
            <person name="Sulston J.E."/>
            <person name="Swann R.M."/>
            <person name="Sycamore N."/>
            <person name="Taylor R."/>
            <person name="Tee L."/>
            <person name="Thomas D.W."/>
            <person name="Thorpe A."/>
            <person name="Tracey A."/>
            <person name="Tromans A.C."/>
            <person name="Vaudin M."/>
            <person name="Wall M."/>
            <person name="Wallis J.M."/>
            <person name="Whitehead S.L."/>
            <person name="Whittaker P."/>
            <person name="Willey D.L."/>
            <person name="Williams L."/>
            <person name="Williams S.A."/>
            <person name="Wilming L."/>
            <person name="Wray P.W."/>
            <person name="Hubbard T."/>
            <person name="Durbin R.M."/>
            <person name="Bentley D.R."/>
            <person name="Beck S."/>
            <person name="Rogers J."/>
        </authorList>
    </citation>
    <scope>NUCLEOTIDE SEQUENCE [LARGE SCALE GENOMIC DNA]</scope>
</reference>
<reference key="2">
    <citation type="journal article" date="2004" name="Genome Res.">
        <title>The status, quality, and expansion of the NIH full-length cDNA project: the Mammalian Gene Collection (MGC).</title>
        <authorList>
            <consortium name="The MGC Project Team"/>
        </authorList>
    </citation>
    <scope>NUCLEOTIDE SEQUENCE [LARGE SCALE MRNA]</scope>
    <scope>VARIANT ASP-173</scope>
    <source>
        <tissue>Brain</tissue>
        <tissue>Muscle</tissue>
    </source>
</reference>
<comment type="subunit">
    <text evidence="1">Interacts with ATP1B1.</text>
</comment>
<comment type="interaction">
    <interactant intactId="EBI-17791123">
        <id>Q8IVV8</id>
    </interactant>
    <interactant intactId="EBI-3932027">
        <id>P21145</id>
        <label>MAL</label>
    </interactant>
    <organismsDiffer>false</organismsDiffer>
    <experiments>3</experiments>
</comment>
<comment type="subcellular location">
    <subcellularLocation>
        <location evidence="4">Cell membrane</location>
        <topology evidence="4">Multi-pass membrane protein</topology>
    </subcellularLocation>
</comment>
<comment type="similarity">
    <text evidence="4">Belongs to the NKAIN family.</text>
</comment>
<evidence type="ECO:0000250" key="1"/>
<evidence type="ECO:0000255" key="2"/>
<evidence type="ECO:0000269" key="3">
    <source>
    </source>
</evidence>
<evidence type="ECO:0000305" key="4"/>
<sequence length="208" mass="23240">MGSCSGRCALVVLCAFQLVAALERQVFDFLGYQWAPILANFVHIIIVILGLFGTIQYRLRYVMVYTLWAAVWVTWNVFIICFYLEVGGLLKDSELLTFSLSRHRSWWRERWPGCLHEEVPAVGLGAPHGQALVSGAGCALEPSYVEALHSCLQILIALLGFVCGCQVVSVFTEEEDSFDFIGGFDPFPLYHVNEKPSSLLSKQVYLPA</sequence>
<accession>Q8IVV8</accession>
<accession>Q4VXQ6</accession>
<accession>Q9BQU8</accession>
<accession>Q9BQU9</accession>
<organism>
    <name type="scientific">Homo sapiens</name>
    <name type="common">Human</name>
    <dbReference type="NCBI Taxonomy" id="9606"/>
    <lineage>
        <taxon>Eukaryota</taxon>
        <taxon>Metazoa</taxon>
        <taxon>Chordata</taxon>
        <taxon>Craniata</taxon>
        <taxon>Vertebrata</taxon>
        <taxon>Euteleostomi</taxon>
        <taxon>Mammalia</taxon>
        <taxon>Eutheria</taxon>
        <taxon>Euarchontoglires</taxon>
        <taxon>Primates</taxon>
        <taxon>Haplorrhini</taxon>
        <taxon>Catarrhini</taxon>
        <taxon>Hominidae</taxon>
        <taxon>Homo</taxon>
    </lineage>
</organism>
<feature type="chain" id="PRO_0000079437" description="Sodium/potassium-transporting ATPase subunit beta-1-interacting protein 4">
    <location>
        <begin position="1"/>
        <end position="208"/>
    </location>
</feature>
<feature type="transmembrane region" description="Helical" evidence="2">
    <location>
        <begin position="35"/>
        <end position="55"/>
    </location>
</feature>
<feature type="transmembrane region" description="Helical" evidence="2">
    <location>
        <begin position="62"/>
        <end position="82"/>
    </location>
</feature>
<feature type="transmembrane region" description="Helical" evidence="2">
    <location>
        <begin position="151"/>
        <end position="171"/>
    </location>
</feature>
<feature type="sequence variant" id="VAR_037051" description="In dbSNP:rs1129659.">
    <original>K</original>
    <variation>Q</variation>
    <location>
        <position position="91"/>
    </location>
</feature>
<feature type="sequence variant" id="VAR_037052" description="In dbSNP:rs2236194.">
    <original>A</original>
    <variation>D</variation>
    <location>
        <position position="131"/>
    </location>
</feature>
<feature type="sequence variant" id="VAR_037053" description="In dbSNP:rs872808.">
    <original>C</original>
    <variation>G</variation>
    <location>
        <position position="151"/>
    </location>
</feature>
<feature type="sequence variant" id="VAR_037054" description="In dbSNP:rs11556207." evidence="3">
    <original>E</original>
    <variation>D</variation>
    <location>
        <position position="173"/>
    </location>
</feature>
<gene>
    <name type="primary">NKAIN4</name>
    <name type="synonym">C20orf58</name>
    <name type="synonym">FAM77A</name>
</gene>
<name>NKAI4_HUMAN</name>
<protein>
    <recommendedName>
        <fullName>Sodium/potassium-transporting ATPase subunit beta-1-interacting protein 4</fullName>
        <shortName>Na(+)/K(+)-transporting ATPase subunit beta-1-interacting protein 4</shortName>
    </recommendedName>
    <alternativeName>
        <fullName>Protein FAM77A</fullName>
    </alternativeName>
</protein>
<proteinExistence type="evidence at protein level"/>
<dbReference type="EMBL" id="AL121827">
    <property type="status" value="NOT_ANNOTATED_CDS"/>
    <property type="molecule type" value="Genomic_DNA"/>
</dbReference>
<dbReference type="EMBL" id="BC041812">
    <property type="protein sequence ID" value="AAH41812.1"/>
    <property type="molecule type" value="mRNA"/>
</dbReference>
<dbReference type="CCDS" id="CCDS13514.1"/>
<dbReference type="RefSeq" id="NP_690603.3">
    <property type="nucleotide sequence ID" value="NM_152864.3"/>
</dbReference>
<dbReference type="SMR" id="Q8IVV8"/>
<dbReference type="BioGRID" id="126120">
    <property type="interactions" value="4"/>
</dbReference>
<dbReference type="FunCoup" id="Q8IVV8">
    <property type="interactions" value="15"/>
</dbReference>
<dbReference type="IntAct" id="Q8IVV8">
    <property type="interactions" value="3"/>
</dbReference>
<dbReference type="STRING" id="9606.ENSP00000359340"/>
<dbReference type="TCDB" id="8.A.118.1.5">
    <property type="family name" value="the na+k+-atpase beta-subunit interacting nkain (nkain) family"/>
</dbReference>
<dbReference type="PhosphoSitePlus" id="Q8IVV8"/>
<dbReference type="BioMuta" id="NKAIN4"/>
<dbReference type="DMDM" id="46576604"/>
<dbReference type="PaxDb" id="9606-ENSP00000359340"/>
<dbReference type="PeptideAtlas" id="Q8IVV8"/>
<dbReference type="Antibodypedia" id="29667">
    <property type="antibodies" value="112 antibodies from 18 providers"/>
</dbReference>
<dbReference type="DNASU" id="128414"/>
<dbReference type="Ensembl" id="ENST00000370316.8">
    <property type="protein sequence ID" value="ENSP00000359340.3"/>
    <property type="gene ID" value="ENSG00000101198.15"/>
</dbReference>
<dbReference type="GeneID" id="128414"/>
<dbReference type="KEGG" id="hsa:128414"/>
<dbReference type="MANE-Select" id="ENST00000370316.8">
    <property type="protein sequence ID" value="ENSP00000359340.3"/>
    <property type="RefSeq nucleotide sequence ID" value="NM_152864.4"/>
    <property type="RefSeq protein sequence ID" value="NP_690603.3"/>
</dbReference>
<dbReference type="UCSC" id="uc002yek.3">
    <property type="organism name" value="human"/>
</dbReference>
<dbReference type="AGR" id="HGNC:16191"/>
<dbReference type="CTD" id="128414"/>
<dbReference type="DisGeNET" id="128414"/>
<dbReference type="GeneCards" id="NKAIN4"/>
<dbReference type="HGNC" id="HGNC:16191">
    <property type="gene designation" value="NKAIN4"/>
</dbReference>
<dbReference type="HPA" id="ENSG00000101198">
    <property type="expression patterns" value="Group enriched (brain, kidney)"/>
</dbReference>
<dbReference type="MIM" id="612873">
    <property type="type" value="gene"/>
</dbReference>
<dbReference type="neXtProt" id="NX_Q8IVV8"/>
<dbReference type="OpenTargets" id="ENSG00000101198"/>
<dbReference type="PharmGKB" id="PA162397583"/>
<dbReference type="VEuPathDB" id="HostDB:ENSG00000101198"/>
<dbReference type="eggNOG" id="KOG4556">
    <property type="taxonomic scope" value="Eukaryota"/>
</dbReference>
<dbReference type="GeneTree" id="ENSGT00940000157989"/>
<dbReference type="HOGENOM" id="CLU_090781_0_0_1"/>
<dbReference type="InParanoid" id="Q8IVV8"/>
<dbReference type="OMA" id="RYVMVYT"/>
<dbReference type="OrthoDB" id="10050321at2759"/>
<dbReference type="PAN-GO" id="Q8IVV8">
    <property type="GO annotations" value="1 GO annotation based on evolutionary models"/>
</dbReference>
<dbReference type="PhylomeDB" id="Q8IVV8"/>
<dbReference type="TreeFam" id="TF321348"/>
<dbReference type="PathwayCommons" id="Q8IVV8"/>
<dbReference type="SignaLink" id="Q8IVV8"/>
<dbReference type="BioGRID-ORCS" id="128414">
    <property type="hits" value="10 hits in 1141 CRISPR screens"/>
</dbReference>
<dbReference type="ChiTaRS" id="NKAIN4">
    <property type="organism name" value="human"/>
</dbReference>
<dbReference type="GenomeRNAi" id="128414"/>
<dbReference type="Pharos" id="Q8IVV8">
    <property type="development level" value="Tdark"/>
</dbReference>
<dbReference type="PRO" id="PR:Q8IVV8"/>
<dbReference type="Proteomes" id="UP000005640">
    <property type="component" value="Chromosome 20"/>
</dbReference>
<dbReference type="RNAct" id="Q8IVV8">
    <property type="molecule type" value="protein"/>
</dbReference>
<dbReference type="Bgee" id="ENSG00000101198">
    <property type="expression patterns" value="Expressed in nucleus accumbens and 142 other cell types or tissues"/>
</dbReference>
<dbReference type="ExpressionAtlas" id="Q8IVV8">
    <property type="expression patterns" value="baseline and differential"/>
</dbReference>
<dbReference type="GO" id="GO:0005886">
    <property type="term" value="C:plasma membrane"/>
    <property type="evidence" value="ECO:0007669"/>
    <property type="project" value="UniProtKB-SubCell"/>
</dbReference>
<dbReference type="GO" id="GO:0002028">
    <property type="term" value="P:regulation of sodium ion transport"/>
    <property type="evidence" value="ECO:0000318"/>
    <property type="project" value="GO_Central"/>
</dbReference>
<dbReference type="InterPro" id="IPR008516">
    <property type="entry name" value="Na/K-Atpase_Interacting"/>
</dbReference>
<dbReference type="PANTHER" id="PTHR13084:SF5">
    <property type="entry name" value="SODIUM_POTASSIUM-TRANSPORTING ATPASE SUBUNIT BETA-1-INTERACTING PROTEIN 4"/>
    <property type="match status" value="1"/>
</dbReference>
<dbReference type="PANTHER" id="PTHR13084">
    <property type="entry name" value="T-CELL LYMPHOMA BREAKPOINT-ASSOCIATED TARGET 1-RELATED"/>
    <property type="match status" value="1"/>
</dbReference>
<dbReference type="Pfam" id="PF05640">
    <property type="entry name" value="NKAIN"/>
    <property type="match status" value="1"/>
</dbReference>